<sequence length="442" mass="48682">MSSSNNQPNFAPFRDEKNNSLVVILGAQWGDEGKGKIVDLLASQADIVCRCQGGNNAGHTVVANGKTYHFHLLPSGIIQSNCTSVIGNGVVIHLPGLFAEIEAIEKNGVQDCWSKLKISDRAHLVFDFHQEADGLLELEKGDSKIGTTKKGIGPAYSTKASRVGLRVCDLMGDFEDFTKKFKNLVKGYRKRFSELEVDVEKELERYKRYADIIRPSIEDTVFFLSEELKKGNKNIIVEGANAVMLDLDFGTYPYVTSSSCGIGGVCTGLGLPPSTIRNVVGICKAYITRVGAGDFPTFLDSDIGTKLQDIGQEFGTTTGRRRRCGWLDIVVLDYVNRISGLTSIAVTKLDVMDTFEEVKIGTAYIHNGQKLKSFPADHSILSEVEVEYITMPGWKQNISLCRKFSDLPENAQAYILKIEELSGIPVQFVGVGKSRDATIRRF</sequence>
<reference key="1">
    <citation type="journal article" date="2008" name="Nature">
        <title>The Trichoplax genome and the nature of placozoans.</title>
        <authorList>
            <person name="Srivastava M."/>
            <person name="Begovic E."/>
            <person name="Chapman J."/>
            <person name="Putnam N.H."/>
            <person name="Hellsten U."/>
            <person name="Kawashima T."/>
            <person name="Kuo A."/>
            <person name="Mitros T."/>
            <person name="Salamov A."/>
            <person name="Carpenter M.L."/>
            <person name="Signorovitch A.Y."/>
            <person name="Moreno M.A."/>
            <person name="Kamm K."/>
            <person name="Grimwood J."/>
            <person name="Schmutz J."/>
            <person name="Shapiro H."/>
            <person name="Grigoriev I.V."/>
            <person name="Buss L.W."/>
            <person name="Schierwater B."/>
            <person name="Dellaporta S.L."/>
            <person name="Rokhsar D.S."/>
        </authorList>
    </citation>
    <scope>NUCLEOTIDE SEQUENCE [LARGE SCALE GENOMIC DNA]</scope>
    <source>
        <strain>Grell-BS-1999</strain>
    </source>
</reference>
<comment type="function">
    <text evidence="1">Plays an important role in the de novo pathway and in the salvage pathway of purine nucleotide biosynthesis. Catalyzes the first committed step in the biosynthesis of AMP from IMP (By similarity).</text>
</comment>
<comment type="catalytic activity">
    <reaction evidence="2">
        <text>IMP + L-aspartate + GTP = N(6)-(1,2-dicarboxyethyl)-AMP + GDP + phosphate + 2 H(+)</text>
        <dbReference type="Rhea" id="RHEA:15753"/>
        <dbReference type="ChEBI" id="CHEBI:15378"/>
        <dbReference type="ChEBI" id="CHEBI:29991"/>
        <dbReference type="ChEBI" id="CHEBI:37565"/>
        <dbReference type="ChEBI" id="CHEBI:43474"/>
        <dbReference type="ChEBI" id="CHEBI:57567"/>
        <dbReference type="ChEBI" id="CHEBI:58053"/>
        <dbReference type="ChEBI" id="CHEBI:58189"/>
        <dbReference type="EC" id="6.3.4.4"/>
    </reaction>
</comment>
<comment type="cofactor">
    <cofactor evidence="2">
        <name>Mg(2+)</name>
        <dbReference type="ChEBI" id="CHEBI:18420"/>
    </cofactor>
    <text evidence="2">Binds 1 Mg(2+) ion per subunit.</text>
</comment>
<comment type="pathway">
    <text evidence="2">Purine metabolism; AMP biosynthesis via de novo pathway; AMP from IMP: step 1/2.</text>
</comment>
<comment type="subunit">
    <text evidence="2">Homodimer.</text>
</comment>
<comment type="subcellular location">
    <subcellularLocation>
        <location evidence="2">Cytoplasm</location>
    </subcellularLocation>
</comment>
<comment type="similarity">
    <text evidence="2">Belongs to the adenylosuccinate synthetase family.</text>
</comment>
<accession>B3S0D3</accession>
<protein>
    <recommendedName>
        <fullName evidence="2">Adenylosuccinate synthetase</fullName>
        <shortName evidence="2">AMPSase</shortName>
        <shortName evidence="2">AdSS</shortName>
        <ecNumber evidence="2">6.3.4.4</ecNumber>
    </recommendedName>
    <alternativeName>
        <fullName evidence="2">IMP--aspartate ligase</fullName>
    </alternativeName>
</protein>
<proteinExistence type="inferred from homology"/>
<dbReference type="EC" id="6.3.4.4" evidence="2"/>
<dbReference type="EMBL" id="DS985246">
    <property type="protein sequence ID" value="EDV24360.1"/>
    <property type="molecule type" value="Genomic_DNA"/>
</dbReference>
<dbReference type="RefSeq" id="XP_002113886.1">
    <property type="nucleotide sequence ID" value="XM_002113850.1"/>
</dbReference>
<dbReference type="SMR" id="B3S0D3"/>
<dbReference type="FunCoup" id="B3S0D3">
    <property type="interactions" value="1967"/>
</dbReference>
<dbReference type="STRING" id="10228.B3S0D3"/>
<dbReference type="EnsemblMetazoa" id="TriadT26635">
    <property type="protein sequence ID" value="TriadP26635"/>
    <property type="gene ID" value="TriadG26635"/>
</dbReference>
<dbReference type="GeneID" id="6755099"/>
<dbReference type="KEGG" id="tad:TRIADDRAFT_26635"/>
<dbReference type="CTD" id="6755099"/>
<dbReference type="eggNOG" id="KOG1355">
    <property type="taxonomic scope" value="Eukaryota"/>
</dbReference>
<dbReference type="HOGENOM" id="CLU_029848_3_0_1"/>
<dbReference type="InParanoid" id="B3S0D3"/>
<dbReference type="OMA" id="QSYVRFL"/>
<dbReference type="OrthoDB" id="10265645at2759"/>
<dbReference type="PhylomeDB" id="B3S0D3"/>
<dbReference type="UniPathway" id="UPA00075">
    <property type="reaction ID" value="UER00335"/>
</dbReference>
<dbReference type="Proteomes" id="UP000009022">
    <property type="component" value="Unassembled WGS sequence"/>
</dbReference>
<dbReference type="GO" id="GO:0005737">
    <property type="term" value="C:cytoplasm"/>
    <property type="evidence" value="ECO:0000318"/>
    <property type="project" value="GO_Central"/>
</dbReference>
<dbReference type="GO" id="GO:0004019">
    <property type="term" value="F:adenylosuccinate synthase activity"/>
    <property type="evidence" value="ECO:0000318"/>
    <property type="project" value="GO_Central"/>
</dbReference>
<dbReference type="GO" id="GO:0005525">
    <property type="term" value="F:GTP binding"/>
    <property type="evidence" value="ECO:0007669"/>
    <property type="project" value="UniProtKB-UniRule"/>
</dbReference>
<dbReference type="GO" id="GO:0000287">
    <property type="term" value="F:magnesium ion binding"/>
    <property type="evidence" value="ECO:0007669"/>
    <property type="project" value="UniProtKB-UniRule"/>
</dbReference>
<dbReference type="GO" id="GO:0044208">
    <property type="term" value="P:'de novo' AMP biosynthetic process"/>
    <property type="evidence" value="ECO:0000318"/>
    <property type="project" value="GO_Central"/>
</dbReference>
<dbReference type="GO" id="GO:0046040">
    <property type="term" value="P:IMP metabolic process"/>
    <property type="evidence" value="ECO:0000318"/>
    <property type="project" value="GO_Central"/>
</dbReference>
<dbReference type="CDD" id="cd03108">
    <property type="entry name" value="AdSS"/>
    <property type="match status" value="1"/>
</dbReference>
<dbReference type="FunFam" id="3.90.170.10:FF:000001">
    <property type="entry name" value="Adenylosuccinate synthetase"/>
    <property type="match status" value="1"/>
</dbReference>
<dbReference type="FunFam" id="1.10.300.10:FF:000002">
    <property type="entry name" value="Adenylosuccinate synthetase, chloroplastic"/>
    <property type="match status" value="1"/>
</dbReference>
<dbReference type="Gene3D" id="3.40.440.10">
    <property type="entry name" value="Adenylosuccinate Synthetase, subunit A, domain 1"/>
    <property type="match status" value="1"/>
</dbReference>
<dbReference type="Gene3D" id="1.10.300.10">
    <property type="entry name" value="Adenylosuccinate Synthetase, subunit A, domain 2"/>
    <property type="match status" value="1"/>
</dbReference>
<dbReference type="Gene3D" id="3.90.170.10">
    <property type="entry name" value="Adenylosuccinate Synthetase, subunit A, domain 3"/>
    <property type="match status" value="1"/>
</dbReference>
<dbReference type="HAMAP" id="MF_00011">
    <property type="entry name" value="Adenylosucc_synth"/>
    <property type="match status" value="1"/>
</dbReference>
<dbReference type="InterPro" id="IPR018220">
    <property type="entry name" value="Adenylosuccin_syn_GTP-bd"/>
</dbReference>
<dbReference type="InterPro" id="IPR033128">
    <property type="entry name" value="Adenylosuccin_syn_Lys_AS"/>
</dbReference>
<dbReference type="InterPro" id="IPR042109">
    <property type="entry name" value="Adenylosuccinate_synth_dom1"/>
</dbReference>
<dbReference type="InterPro" id="IPR042110">
    <property type="entry name" value="Adenylosuccinate_synth_dom2"/>
</dbReference>
<dbReference type="InterPro" id="IPR042111">
    <property type="entry name" value="Adenylosuccinate_synth_dom3"/>
</dbReference>
<dbReference type="InterPro" id="IPR001114">
    <property type="entry name" value="Adenylosuccinate_synthetase"/>
</dbReference>
<dbReference type="InterPro" id="IPR027417">
    <property type="entry name" value="P-loop_NTPase"/>
</dbReference>
<dbReference type="NCBIfam" id="NF002223">
    <property type="entry name" value="PRK01117.1"/>
    <property type="match status" value="1"/>
</dbReference>
<dbReference type="NCBIfam" id="TIGR00184">
    <property type="entry name" value="purA"/>
    <property type="match status" value="1"/>
</dbReference>
<dbReference type="PANTHER" id="PTHR11846">
    <property type="entry name" value="ADENYLOSUCCINATE SYNTHETASE"/>
    <property type="match status" value="1"/>
</dbReference>
<dbReference type="PANTHER" id="PTHR11846:SF0">
    <property type="entry name" value="ADENYLOSUCCINATE SYNTHETASE"/>
    <property type="match status" value="1"/>
</dbReference>
<dbReference type="Pfam" id="PF00709">
    <property type="entry name" value="Adenylsucc_synt"/>
    <property type="match status" value="1"/>
</dbReference>
<dbReference type="SMART" id="SM00788">
    <property type="entry name" value="Adenylsucc_synt"/>
    <property type="match status" value="1"/>
</dbReference>
<dbReference type="SUPFAM" id="SSF52540">
    <property type="entry name" value="P-loop containing nucleoside triphosphate hydrolases"/>
    <property type="match status" value="1"/>
</dbReference>
<dbReference type="PROSITE" id="PS01266">
    <property type="entry name" value="ADENYLOSUCCIN_SYN_1"/>
    <property type="match status" value="1"/>
</dbReference>
<dbReference type="PROSITE" id="PS00513">
    <property type="entry name" value="ADENYLOSUCCIN_SYN_2"/>
    <property type="match status" value="1"/>
</dbReference>
<feature type="chain" id="PRO_0000399312" description="Adenylosuccinate synthetase">
    <location>
        <begin position="1"/>
        <end position="442"/>
    </location>
</feature>
<feature type="active site" description="Proton acceptor" evidence="2">
    <location>
        <position position="31"/>
    </location>
</feature>
<feature type="active site" description="Proton donor" evidence="2">
    <location>
        <position position="59"/>
    </location>
</feature>
<feature type="binding site" evidence="2">
    <location>
        <begin position="30"/>
        <end position="36"/>
    </location>
    <ligand>
        <name>GTP</name>
        <dbReference type="ChEBI" id="CHEBI:37565"/>
    </ligand>
</feature>
<feature type="binding site" description="in other chain" evidence="2">
    <location>
        <begin position="31"/>
        <end position="34"/>
    </location>
    <ligand>
        <name>IMP</name>
        <dbReference type="ChEBI" id="CHEBI:58053"/>
        <note>ligand shared between dimeric partners</note>
    </ligand>
</feature>
<feature type="binding site" evidence="2">
    <location>
        <position position="31"/>
    </location>
    <ligand>
        <name>Mg(2+)</name>
        <dbReference type="ChEBI" id="CHEBI:18420"/>
    </ligand>
</feature>
<feature type="binding site" description="in other chain" evidence="2">
    <location>
        <begin position="56"/>
        <end position="59"/>
    </location>
    <ligand>
        <name>IMP</name>
        <dbReference type="ChEBI" id="CHEBI:58053"/>
        <note>ligand shared between dimeric partners</note>
    </ligand>
</feature>
<feature type="binding site" evidence="2">
    <location>
        <begin position="58"/>
        <end position="60"/>
    </location>
    <ligand>
        <name>GTP</name>
        <dbReference type="ChEBI" id="CHEBI:37565"/>
    </ligand>
</feature>
<feature type="binding site" evidence="2">
    <location>
        <position position="58"/>
    </location>
    <ligand>
        <name>Mg(2+)</name>
        <dbReference type="ChEBI" id="CHEBI:18420"/>
    </ligand>
</feature>
<feature type="binding site" description="in other chain" evidence="2">
    <location>
        <position position="148"/>
    </location>
    <ligand>
        <name>IMP</name>
        <dbReference type="ChEBI" id="CHEBI:58053"/>
        <note>ligand shared between dimeric partners</note>
    </ligand>
</feature>
<feature type="binding site" evidence="2">
    <location>
        <position position="162"/>
    </location>
    <ligand>
        <name>IMP</name>
        <dbReference type="ChEBI" id="CHEBI:58053"/>
        <note>ligand shared between dimeric partners</note>
    </ligand>
</feature>
<feature type="binding site" description="in other chain" evidence="2">
    <location>
        <position position="241"/>
    </location>
    <ligand>
        <name>IMP</name>
        <dbReference type="ChEBI" id="CHEBI:58053"/>
        <note>ligand shared between dimeric partners</note>
    </ligand>
</feature>
<feature type="binding site" description="in other chain" evidence="2">
    <location>
        <position position="256"/>
    </location>
    <ligand>
        <name>IMP</name>
        <dbReference type="ChEBI" id="CHEBI:58053"/>
        <note>ligand shared between dimeric partners</note>
    </ligand>
</feature>
<feature type="binding site" evidence="2">
    <location>
        <begin position="316"/>
        <end position="322"/>
    </location>
    <ligand>
        <name>substrate</name>
    </ligand>
</feature>
<feature type="binding site" description="in other chain" evidence="2">
    <location>
        <position position="320"/>
    </location>
    <ligand>
        <name>IMP</name>
        <dbReference type="ChEBI" id="CHEBI:58053"/>
        <note>ligand shared between dimeric partners</note>
    </ligand>
</feature>
<feature type="binding site" evidence="2">
    <location>
        <position position="322"/>
    </location>
    <ligand>
        <name>GTP</name>
        <dbReference type="ChEBI" id="CHEBI:37565"/>
    </ligand>
</feature>
<feature type="binding site" evidence="2">
    <location>
        <begin position="348"/>
        <end position="350"/>
    </location>
    <ligand>
        <name>GTP</name>
        <dbReference type="ChEBI" id="CHEBI:37565"/>
    </ligand>
</feature>
<feature type="binding site" evidence="2">
    <location>
        <begin position="430"/>
        <end position="432"/>
    </location>
    <ligand>
        <name>GTP</name>
        <dbReference type="ChEBI" id="CHEBI:37565"/>
    </ligand>
</feature>
<gene>
    <name type="ORF">TRIADDRAFT_26635</name>
</gene>
<keyword id="KW-0963">Cytoplasm</keyword>
<keyword id="KW-0342">GTP-binding</keyword>
<keyword id="KW-0436">Ligase</keyword>
<keyword id="KW-0460">Magnesium</keyword>
<keyword id="KW-0479">Metal-binding</keyword>
<keyword id="KW-0547">Nucleotide-binding</keyword>
<keyword id="KW-0658">Purine biosynthesis</keyword>
<keyword id="KW-1185">Reference proteome</keyword>
<name>PURA_TRIAD</name>
<evidence type="ECO:0000250" key="1"/>
<evidence type="ECO:0000255" key="2">
    <source>
        <dbReference type="HAMAP-Rule" id="MF_03125"/>
    </source>
</evidence>
<organism>
    <name type="scientific">Trichoplax adhaerens</name>
    <name type="common">Trichoplax reptans</name>
    <dbReference type="NCBI Taxonomy" id="10228"/>
    <lineage>
        <taxon>Eukaryota</taxon>
        <taxon>Metazoa</taxon>
        <taxon>Placozoa</taxon>
        <taxon>Uniplacotomia</taxon>
        <taxon>Trichoplacea</taxon>
        <taxon>Trichoplacidae</taxon>
        <taxon>Trichoplax</taxon>
    </lineage>
</organism>